<evidence type="ECO:0000255" key="1">
    <source>
        <dbReference type="HAMAP-Rule" id="MF_00176"/>
    </source>
</evidence>
<dbReference type="EC" id="6.1.1.11" evidence="1"/>
<dbReference type="EMBL" id="AE016795">
    <property type="protein sequence ID" value="AAO11277.1"/>
    <property type="molecule type" value="Genomic_DNA"/>
</dbReference>
<dbReference type="RefSeq" id="WP_011080763.1">
    <property type="nucleotide sequence ID" value="NC_004459.3"/>
</dbReference>
<dbReference type="SMR" id="Q8D8M6"/>
<dbReference type="KEGG" id="vvu:VV1_2946"/>
<dbReference type="HOGENOM" id="CLU_023797_1_1_6"/>
<dbReference type="UniPathway" id="UPA00906">
    <property type="reaction ID" value="UER00895"/>
</dbReference>
<dbReference type="Proteomes" id="UP000002275">
    <property type="component" value="Chromosome 1"/>
</dbReference>
<dbReference type="GO" id="GO:0005737">
    <property type="term" value="C:cytoplasm"/>
    <property type="evidence" value="ECO:0007669"/>
    <property type="project" value="UniProtKB-SubCell"/>
</dbReference>
<dbReference type="GO" id="GO:0005524">
    <property type="term" value="F:ATP binding"/>
    <property type="evidence" value="ECO:0007669"/>
    <property type="project" value="UniProtKB-UniRule"/>
</dbReference>
<dbReference type="GO" id="GO:0004828">
    <property type="term" value="F:serine-tRNA ligase activity"/>
    <property type="evidence" value="ECO:0007669"/>
    <property type="project" value="UniProtKB-UniRule"/>
</dbReference>
<dbReference type="GO" id="GO:0016260">
    <property type="term" value="P:selenocysteine biosynthetic process"/>
    <property type="evidence" value="ECO:0007669"/>
    <property type="project" value="UniProtKB-UniRule"/>
</dbReference>
<dbReference type="GO" id="GO:0006434">
    <property type="term" value="P:seryl-tRNA aminoacylation"/>
    <property type="evidence" value="ECO:0007669"/>
    <property type="project" value="UniProtKB-UniRule"/>
</dbReference>
<dbReference type="CDD" id="cd00770">
    <property type="entry name" value="SerRS_core"/>
    <property type="match status" value="1"/>
</dbReference>
<dbReference type="FunFam" id="3.30.930.10:FF:000018">
    <property type="entry name" value="Serine--tRNA ligase"/>
    <property type="match status" value="1"/>
</dbReference>
<dbReference type="Gene3D" id="3.30.930.10">
    <property type="entry name" value="Bira Bifunctional Protein, Domain 2"/>
    <property type="match status" value="1"/>
</dbReference>
<dbReference type="Gene3D" id="1.10.287.40">
    <property type="entry name" value="Serine-tRNA synthetase, tRNA binding domain"/>
    <property type="match status" value="1"/>
</dbReference>
<dbReference type="HAMAP" id="MF_00176">
    <property type="entry name" value="Ser_tRNA_synth_type1"/>
    <property type="match status" value="1"/>
</dbReference>
<dbReference type="InterPro" id="IPR002314">
    <property type="entry name" value="aa-tRNA-synt_IIb"/>
</dbReference>
<dbReference type="InterPro" id="IPR006195">
    <property type="entry name" value="aa-tRNA-synth_II"/>
</dbReference>
<dbReference type="InterPro" id="IPR045864">
    <property type="entry name" value="aa-tRNA-synth_II/BPL/LPL"/>
</dbReference>
<dbReference type="InterPro" id="IPR002317">
    <property type="entry name" value="Ser-tRNA-ligase_type_1"/>
</dbReference>
<dbReference type="InterPro" id="IPR015866">
    <property type="entry name" value="Ser-tRNA-synth_1_N"/>
</dbReference>
<dbReference type="InterPro" id="IPR042103">
    <property type="entry name" value="SerRS_1_N_sf"/>
</dbReference>
<dbReference type="InterPro" id="IPR033729">
    <property type="entry name" value="SerRS_core"/>
</dbReference>
<dbReference type="InterPro" id="IPR010978">
    <property type="entry name" value="tRNA-bd_arm"/>
</dbReference>
<dbReference type="NCBIfam" id="TIGR00414">
    <property type="entry name" value="serS"/>
    <property type="match status" value="1"/>
</dbReference>
<dbReference type="PANTHER" id="PTHR43697:SF1">
    <property type="entry name" value="SERINE--TRNA LIGASE"/>
    <property type="match status" value="1"/>
</dbReference>
<dbReference type="PANTHER" id="PTHR43697">
    <property type="entry name" value="SERYL-TRNA SYNTHETASE"/>
    <property type="match status" value="1"/>
</dbReference>
<dbReference type="Pfam" id="PF02403">
    <property type="entry name" value="Seryl_tRNA_N"/>
    <property type="match status" value="1"/>
</dbReference>
<dbReference type="Pfam" id="PF00587">
    <property type="entry name" value="tRNA-synt_2b"/>
    <property type="match status" value="1"/>
</dbReference>
<dbReference type="PIRSF" id="PIRSF001529">
    <property type="entry name" value="Ser-tRNA-synth_IIa"/>
    <property type="match status" value="1"/>
</dbReference>
<dbReference type="PRINTS" id="PR00981">
    <property type="entry name" value="TRNASYNTHSER"/>
</dbReference>
<dbReference type="SUPFAM" id="SSF55681">
    <property type="entry name" value="Class II aaRS and biotin synthetases"/>
    <property type="match status" value="1"/>
</dbReference>
<dbReference type="SUPFAM" id="SSF46589">
    <property type="entry name" value="tRNA-binding arm"/>
    <property type="match status" value="1"/>
</dbReference>
<dbReference type="PROSITE" id="PS50862">
    <property type="entry name" value="AA_TRNA_LIGASE_II"/>
    <property type="match status" value="1"/>
</dbReference>
<sequence>MLDSKLLRTELDETAAKLARRGFKLDVETIGKLEEQRKSIQVEVENLQSTRNSISKQIGQLMSAGDKEGAEKIKQQIGSLGSDLDAKKIELDAVMAQLDDIILSVPNIPADEVPNGKDENDNLEISRWGEPKSYDFELKDHVDLGEMGDGLDFASAVKITGARFIVMKGQFARLHRAIAQFMLDLHTEEHGYTEMYVPYLVNADSLFGTGQLPKFGKDLFHTEPLTEKASDEEPRKLSLIPTAEVPVTNLVRDTISDEADLPLKMTAHTPCFRSEAGSYGRDTRGLIRMHQFDKVELVQITKPEDSMNALEELTGHAEKVLQLLELPYRKVLLCTGDMGFGSHKTYDLEVWVPAQNTYREISSCSNMWDFQARRMQARFRRKGEKKPELVHTLNGSGLAVGRTMVAILENNQEADGRIAIPTVLQKYMGGATHIG</sequence>
<name>SYS_VIBVU</name>
<feature type="chain" id="PRO_0000122156" description="Serine--tRNA ligase">
    <location>
        <begin position="1"/>
        <end position="435"/>
    </location>
</feature>
<feature type="binding site" evidence="1">
    <location>
        <begin position="242"/>
        <end position="244"/>
    </location>
    <ligand>
        <name>L-serine</name>
        <dbReference type="ChEBI" id="CHEBI:33384"/>
    </ligand>
</feature>
<feature type="binding site" evidence="1">
    <location>
        <begin position="273"/>
        <end position="275"/>
    </location>
    <ligand>
        <name>ATP</name>
        <dbReference type="ChEBI" id="CHEBI:30616"/>
    </ligand>
</feature>
<feature type="binding site" evidence="1">
    <location>
        <position position="296"/>
    </location>
    <ligand>
        <name>L-serine</name>
        <dbReference type="ChEBI" id="CHEBI:33384"/>
    </ligand>
</feature>
<feature type="binding site" evidence="1">
    <location>
        <begin position="360"/>
        <end position="363"/>
    </location>
    <ligand>
        <name>ATP</name>
        <dbReference type="ChEBI" id="CHEBI:30616"/>
    </ligand>
</feature>
<feature type="binding site" evidence="1">
    <location>
        <position position="396"/>
    </location>
    <ligand>
        <name>L-serine</name>
        <dbReference type="ChEBI" id="CHEBI:33384"/>
    </ligand>
</feature>
<organism>
    <name type="scientific">Vibrio vulnificus (strain CMCP6)</name>
    <dbReference type="NCBI Taxonomy" id="216895"/>
    <lineage>
        <taxon>Bacteria</taxon>
        <taxon>Pseudomonadati</taxon>
        <taxon>Pseudomonadota</taxon>
        <taxon>Gammaproteobacteria</taxon>
        <taxon>Vibrionales</taxon>
        <taxon>Vibrionaceae</taxon>
        <taxon>Vibrio</taxon>
    </lineage>
</organism>
<proteinExistence type="inferred from homology"/>
<accession>Q8D8M6</accession>
<keyword id="KW-0030">Aminoacyl-tRNA synthetase</keyword>
<keyword id="KW-0067">ATP-binding</keyword>
<keyword id="KW-0963">Cytoplasm</keyword>
<keyword id="KW-0436">Ligase</keyword>
<keyword id="KW-0547">Nucleotide-binding</keyword>
<keyword id="KW-0648">Protein biosynthesis</keyword>
<protein>
    <recommendedName>
        <fullName evidence="1">Serine--tRNA ligase</fullName>
        <ecNumber evidence="1">6.1.1.11</ecNumber>
    </recommendedName>
    <alternativeName>
        <fullName evidence="1">Seryl-tRNA synthetase</fullName>
        <shortName evidence="1">SerRS</shortName>
    </alternativeName>
    <alternativeName>
        <fullName evidence="1">Seryl-tRNA(Ser/Sec) synthetase</fullName>
    </alternativeName>
</protein>
<comment type="function">
    <text evidence="1">Catalyzes the attachment of serine to tRNA(Ser). Is also able to aminoacylate tRNA(Sec) with serine, to form the misacylated tRNA L-seryl-tRNA(Sec), which will be further converted into selenocysteinyl-tRNA(Sec).</text>
</comment>
<comment type="catalytic activity">
    <reaction evidence="1">
        <text>tRNA(Ser) + L-serine + ATP = L-seryl-tRNA(Ser) + AMP + diphosphate + H(+)</text>
        <dbReference type="Rhea" id="RHEA:12292"/>
        <dbReference type="Rhea" id="RHEA-COMP:9669"/>
        <dbReference type="Rhea" id="RHEA-COMP:9703"/>
        <dbReference type="ChEBI" id="CHEBI:15378"/>
        <dbReference type="ChEBI" id="CHEBI:30616"/>
        <dbReference type="ChEBI" id="CHEBI:33019"/>
        <dbReference type="ChEBI" id="CHEBI:33384"/>
        <dbReference type="ChEBI" id="CHEBI:78442"/>
        <dbReference type="ChEBI" id="CHEBI:78533"/>
        <dbReference type="ChEBI" id="CHEBI:456215"/>
        <dbReference type="EC" id="6.1.1.11"/>
    </reaction>
</comment>
<comment type="catalytic activity">
    <reaction evidence="1">
        <text>tRNA(Sec) + L-serine + ATP = L-seryl-tRNA(Sec) + AMP + diphosphate + H(+)</text>
        <dbReference type="Rhea" id="RHEA:42580"/>
        <dbReference type="Rhea" id="RHEA-COMP:9742"/>
        <dbReference type="Rhea" id="RHEA-COMP:10128"/>
        <dbReference type="ChEBI" id="CHEBI:15378"/>
        <dbReference type="ChEBI" id="CHEBI:30616"/>
        <dbReference type="ChEBI" id="CHEBI:33019"/>
        <dbReference type="ChEBI" id="CHEBI:33384"/>
        <dbReference type="ChEBI" id="CHEBI:78442"/>
        <dbReference type="ChEBI" id="CHEBI:78533"/>
        <dbReference type="ChEBI" id="CHEBI:456215"/>
        <dbReference type="EC" id="6.1.1.11"/>
    </reaction>
</comment>
<comment type="pathway">
    <text evidence="1">Aminoacyl-tRNA biosynthesis; selenocysteinyl-tRNA(Sec) biosynthesis; L-seryl-tRNA(Sec) from L-serine and tRNA(Sec): step 1/1.</text>
</comment>
<comment type="subunit">
    <text evidence="1">Homodimer. The tRNA molecule binds across the dimer.</text>
</comment>
<comment type="subcellular location">
    <subcellularLocation>
        <location evidence="1">Cytoplasm</location>
    </subcellularLocation>
</comment>
<comment type="domain">
    <text evidence="1">Consists of two distinct domains, a catalytic core and a N-terminal extension that is involved in tRNA binding.</text>
</comment>
<comment type="similarity">
    <text evidence="1">Belongs to the class-II aminoacyl-tRNA synthetase family. Type-1 seryl-tRNA synthetase subfamily.</text>
</comment>
<gene>
    <name evidence="1" type="primary">serS</name>
    <name type="ordered locus">VV1_2946</name>
</gene>
<reference key="1">
    <citation type="submission" date="2002-12" db="EMBL/GenBank/DDBJ databases">
        <title>Complete genome sequence of Vibrio vulnificus CMCP6.</title>
        <authorList>
            <person name="Rhee J.H."/>
            <person name="Kim S.Y."/>
            <person name="Chung S.S."/>
            <person name="Kim J.J."/>
            <person name="Moon Y.H."/>
            <person name="Jeong H."/>
            <person name="Choy H.E."/>
        </authorList>
    </citation>
    <scope>NUCLEOTIDE SEQUENCE [LARGE SCALE GENOMIC DNA]</scope>
    <source>
        <strain>CMCP6</strain>
    </source>
</reference>